<proteinExistence type="inferred from homology"/>
<accession>Q8CX59</accession>
<keyword id="KW-0067">ATP-binding</keyword>
<keyword id="KW-0963">Cytoplasm</keyword>
<keyword id="KW-0436">Ligase</keyword>
<keyword id="KW-0547">Nucleotide-binding</keyword>
<keyword id="KW-0566">Pantothenate biosynthesis</keyword>
<keyword id="KW-1185">Reference proteome</keyword>
<sequence length="283" mass="32194">MTKRITTIKEMQHLSRTRKAHNKQIGFVPTMGALHDGHLQMVKQSIADNDYTVVSVFVNPLQFGPNEDFDAYPRTIEEDEAQLDALGADYVFYPSVEEMYPKPLELSINVHRMAEVLEGAKRPGHFDGVVTVVNKLFNIIRPDIAYFGKKDAQQLAIIEKMVEEFNHPITIRGMDTIRELDGLAKSSRNIYLTDNERQEAVQLYQSLLKAKQLYDAGERSSDVIIDEIHTHLTTHTSGTIEEIAIYSYPELIEQTQITGRIFISLAVKFSQARLIDNIIVEKS</sequence>
<comment type="function">
    <text evidence="1">Catalyzes the condensation of pantoate with beta-alanine in an ATP-dependent reaction via a pantoyl-adenylate intermediate.</text>
</comment>
<comment type="catalytic activity">
    <reaction evidence="1">
        <text>(R)-pantoate + beta-alanine + ATP = (R)-pantothenate + AMP + diphosphate + H(+)</text>
        <dbReference type="Rhea" id="RHEA:10912"/>
        <dbReference type="ChEBI" id="CHEBI:15378"/>
        <dbReference type="ChEBI" id="CHEBI:15980"/>
        <dbReference type="ChEBI" id="CHEBI:29032"/>
        <dbReference type="ChEBI" id="CHEBI:30616"/>
        <dbReference type="ChEBI" id="CHEBI:33019"/>
        <dbReference type="ChEBI" id="CHEBI:57966"/>
        <dbReference type="ChEBI" id="CHEBI:456215"/>
        <dbReference type="EC" id="6.3.2.1"/>
    </reaction>
</comment>
<comment type="pathway">
    <text evidence="1">Cofactor biosynthesis; (R)-pantothenate biosynthesis; (R)-pantothenate from (R)-pantoate and beta-alanine: step 1/1.</text>
</comment>
<comment type="subunit">
    <text evidence="1">Homodimer.</text>
</comment>
<comment type="subcellular location">
    <subcellularLocation>
        <location evidence="1">Cytoplasm</location>
    </subcellularLocation>
</comment>
<comment type="miscellaneous">
    <text evidence="1">The reaction proceeds by a bi uni uni bi ping pong mechanism.</text>
</comment>
<comment type="similarity">
    <text evidence="1">Belongs to the pantothenate synthetase family.</text>
</comment>
<gene>
    <name evidence="1" type="primary">panC</name>
    <name type="ordered locus">OB3275</name>
</gene>
<reference key="1">
    <citation type="journal article" date="2002" name="Nucleic Acids Res.">
        <title>Genome sequence of Oceanobacillus iheyensis isolated from the Iheya Ridge and its unexpected adaptive capabilities to extreme environments.</title>
        <authorList>
            <person name="Takami H."/>
            <person name="Takaki Y."/>
            <person name="Uchiyama I."/>
        </authorList>
    </citation>
    <scope>NUCLEOTIDE SEQUENCE [LARGE SCALE GENOMIC DNA]</scope>
    <source>
        <strain>DSM 14371 / CIP 107618 / JCM 11309 / KCTC 3954 / HTE831</strain>
    </source>
</reference>
<feature type="chain" id="PRO_0000128251" description="Pantothenate synthetase">
    <location>
        <begin position="1"/>
        <end position="283"/>
    </location>
</feature>
<feature type="active site" description="Proton donor" evidence="1">
    <location>
        <position position="38"/>
    </location>
</feature>
<feature type="binding site" evidence="1">
    <location>
        <begin position="31"/>
        <end position="38"/>
    </location>
    <ligand>
        <name>ATP</name>
        <dbReference type="ChEBI" id="CHEBI:30616"/>
    </ligand>
</feature>
<feature type="binding site" evidence="1">
    <location>
        <position position="62"/>
    </location>
    <ligand>
        <name>(R)-pantoate</name>
        <dbReference type="ChEBI" id="CHEBI:15980"/>
    </ligand>
</feature>
<feature type="binding site" evidence="1">
    <location>
        <position position="62"/>
    </location>
    <ligand>
        <name>beta-alanine</name>
        <dbReference type="ChEBI" id="CHEBI:57966"/>
    </ligand>
</feature>
<feature type="binding site" evidence="1">
    <location>
        <begin position="148"/>
        <end position="151"/>
    </location>
    <ligand>
        <name>ATP</name>
        <dbReference type="ChEBI" id="CHEBI:30616"/>
    </ligand>
</feature>
<feature type="binding site" evidence="1">
    <location>
        <position position="154"/>
    </location>
    <ligand>
        <name>(R)-pantoate</name>
        <dbReference type="ChEBI" id="CHEBI:15980"/>
    </ligand>
</feature>
<feature type="binding site" evidence="1">
    <location>
        <position position="177"/>
    </location>
    <ligand>
        <name>ATP</name>
        <dbReference type="ChEBI" id="CHEBI:30616"/>
    </ligand>
</feature>
<feature type="binding site" evidence="1">
    <location>
        <begin position="185"/>
        <end position="188"/>
    </location>
    <ligand>
        <name>ATP</name>
        <dbReference type="ChEBI" id="CHEBI:30616"/>
    </ligand>
</feature>
<name>PANC_OCEIH</name>
<protein>
    <recommendedName>
        <fullName evidence="1">Pantothenate synthetase</fullName>
        <shortName evidence="1">PS</shortName>
        <ecNumber evidence="1">6.3.2.1</ecNumber>
    </recommendedName>
    <alternativeName>
        <fullName evidence="1">Pantoate--beta-alanine ligase</fullName>
    </alternativeName>
    <alternativeName>
        <fullName evidence="1">Pantoate-activating enzyme</fullName>
    </alternativeName>
</protein>
<evidence type="ECO:0000255" key="1">
    <source>
        <dbReference type="HAMAP-Rule" id="MF_00158"/>
    </source>
</evidence>
<dbReference type="EC" id="6.3.2.1" evidence="1"/>
<dbReference type="EMBL" id="BA000028">
    <property type="protein sequence ID" value="BAC15231.1"/>
    <property type="molecule type" value="Genomic_DNA"/>
</dbReference>
<dbReference type="RefSeq" id="WP_011067671.1">
    <property type="nucleotide sequence ID" value="NC_004193.1"/>
</dbReference>
<dbReference type="SMR" id="Q8CX59"/>
<dbReference type="STRING" id="221109.gene:10735527"/>
<dbReference type="KEGG" id="oih:OB3275"/>
<dbReference type="eggNOG" id="COG0414">
    <property type="taxonomic scope" value="Bacteria"/>
</dbReference>
<dbReference type="HOGENOM" id="CLU_047148_0_0_9"/>
<dbReference type="OrthoDB" id="9773087at2"/>
<dbReference type="PhylomeDB" id="Q8CX59"/>
<dbReference type="UniPathway" id="UPA00028">
    <property type="reaction ID" value="UER00005"/>
</dbReference>
<dbReference type="Proteomes" id="UP000000822">
    <property type="component" value="Chromosome"/>
</dbReference>
<dbReference type="GO" id="GO:0005829">
    <property type="term" value="C:cytosol"/>
    <property type="evidence" value="ECO:0007669"/>
    <property type="project" value="TreeGrafter"/>
</dbReference>
<dbReference type="GO" id="GO:0005524">
    <property type="term" value="F:ATP binding"/>
    <property type="evidence" value="ECO:0007669"/>
    <property type="project" value="UniProtKB-KW"/>
</dbReference>
<dbReference type="GO" id="GO:0004592">
    <property type="term" value="F:pantoate-beta-alanine ligase activity"/>
    <property type="evidence" value="ECO:0007669"/>
    <property type="project" value="UniProtKB-UniRule"/>
</dbReference>
<dbReference type="GO" id="GO:0015940">
    <property type="term" value="P:pantothenate biosynthetic process"/>
    <property type="evidence" value="ECO:0007669"/>
    <property type="project" value="UniProtKB-UniRule"/>
</dbReference>
<dbReference type="CDD" id="cd00560">
    <property type="entry name" value="PanC"/>
    <property type="match status" value="1"/>
</dbReference>
<dbReference type="FunFam" id="3.30.1300.10:FF:000001">
    <property type="entry name" value="Pantothenate synthetase"/>
    <property type="match status" value="1"/>
</dbReference>
<dbReference type="FunFam" id="3.40.50.620:FF:000013">
    <property type="entry name" value="Pantothenate synthetase"/>
    <property type="match status" value="1"/>
</dbReference>
<dbReference type="Gene3D" id="3.40.50.620">
    <property type="entry name" value="HUPs"/>
    <property type="match status" value="1"/>
</dbReference>
<dbReference type="Gene3D" id="3.30.1300.10">
    <property type="entry name" value="Pantoate-beta-alanine ligase, C-terminal domain"/>
    <property type="match status" value="1"/>
</dbReference>
<dbReference type="HAMAP" id="MF_00158">
    <property type="entry name" value="PanC"/>
    <property type="match status" value="1"/>
</dbReference>
<dbReference type="InterPro" id="IPR003721">
    <property type="entry name" value="Pantoate_ligase"/>
</dbReference>
<dbReference type="InterPro" id="IPR042176">
    <property type="entry name" value="Pantoate_ligase_C"/>
</dbReference>
<dbReference type="InterPro" id="IPR014729">
    <property type="entry name" value="Rossmann-like_a/b/a_fold"/>
</dbReference>
<dbReference type="NCBIfam" id="TIGR00018">
    <property type="entry name" value="panC"/>
    <property type="match status" value="1"/>
</dbReference>
<dbReference type="PANTHER" id="PTHR21299">
    <property type="entry name" value="CYTIDYLATE KINASE/PANTOATE-BETA-ALANINE LIGASE"/>
    <property type="match status" value="1"/>
</dbReference>
<dbReference type="PANTHER" id="PTHR21299:SF1">
    <property type="entry name" value="PANTOATE--BETA-ALANINE LIGASE"/>
    <property type="match status" value="1"/>
</dbReference>
<dbReference type="Pfam" id="PF02569">
    <property type="entry name" value="Pantoate_ligase"/>
    <property type="match status" value="1"/>
</dbReference>
<dbReference type="SUPFAM" id="SSF52374">
    <property type="entry name" value="Nucleotidylyl transferase"/>
    <property type="match status" value="1"/>
</dbReference>
<organism>
    <name type="scientific">Oceanobacillus iheyensis (strain DSM 14371 / CIP 107618 / JCM 11309 / KCTC 3954 / HTE831)</name>
    <dbReference type="NCBI Taxonomy" id="221109"/>
    <lineage>
        <taxon>Bacteria</taxon>
        <taxon>Bacillati</taxon>
        <taxon>Bacillota</taxon>
        <taxon>Bacilli</taxon>
        <taxon>Bacillales</taxon>
        <taxon>Bacillaceae</taxon>
        <taxon>Oceanobacillus</taxon>
    </lineage>
</organism>